<reference key="1">
    <citation type="journal article" date="2006" name="BMC Genomics">
        <title>The genome of the square archaeon Haloquadratum walsbyi: life at the limits of water activity.</title>
        <authorList>
            <person name="Bolhuis H."/>
            <person name="Palm P."/>
            <person name="Wende A."/>
            <person name="Falb M."/>
            <person name="Rampp M."/>
            <person name="Rodriguez-Valera F."/>
            <person name="Pfeiffer F."/>
            <person name="Oesterhelt D."/>
        </authorList>
    </citation>
    <scope>NUCLEOTIDE SEQUENCE [LARGE SCALE GENOMIC DNA]</scope>
    <source>
        <strain>DSM 16790 / HBSQ001</strain>
    </source>
</reference>
<feature type="chain" id="PRO_1000025454" description="Glutamyl-tRNA(Gln) amidotransferase subunit D">
    <location>
        <begin position="1"/>
        <end position="442"/>
    </location>
</feature>
<feature type="domain" description="Asparaginase/glutaminase" evidence="2">
    <location>
        <begin position="102"/>
        <end position="429"/>
    </location>
</feature>
<feature type="region of interest" description="Disordered" evidence="3">
    <location>
        <begin position="63"/>
        <end position="84"/>
    </location>
</feature>
<feature type="active site" evidence="1">
    <location>
        <position position="112"/>
    </location>
</feature>
<feature type="active site" evidence="1">
    <location>
        <position position="188"/>
    </location>
</feature>
<feature type="active site" evidence="1">
    <location>
        <position position="189"/>
    </location>
</feature>
<feature type="active site" evidence="1">
    <location>
        <position position="265"/>
    </location>
</feature>
<protein>
    <recommendedName>
        <fullName evidence="1">Glutamyl-tRNA(Gln) amidotransferase subunit D</fullName>
        <shortName evidence="1">Glu-ADT subunit D</shortName>
        <ecNumber evidence="1">6.3.5.-</ecNumber>
    </recommendedName>
</protein>
<gene>
    <name evidence="1" type="primary">gatD</name>
    <name type="ordered locus">HQ_2776A</name>
</gene>
<evidence type="ECO:0000255" key="1">
    <source>
        <dbReference type="HAMAP-Rule" id="MF_00586"/>
    </source>
</evidence>
<evidence type="ECO:0000255" key="2">
    <source>
        <dbReference type="PROSITE-ProRule" id="PRU01068"/>
    </source>
</evidence>
<evidence type="ECO:0000256" key="3">
    <source>
        <dbReference type="SAM" id="MobiDB-lite"/>
    </source>
</evidence>
<sequence length="442" mass="46773">MSPHPGDRVRVERADVTNEGILMPSSTSDHLVIKLDGGYNVGIDRADASIDLVTSDAYDIGGTQTDIGSSAGAGADTEADKTESDITSKSAASAVAFDESLPTVSLISTGGTIASTVDYRTGAVTAQFDAEDVLRAVPDLAGRANYRGRVVRNILSENMTPAVWQDLAAAVADEIRAGADGVVVMHGTDTMQYSASALSYMLDTPVPVVFTGSQRSADRPSSDNVMNAVCAVEAATADISGVFVCMHASTADDTCALHRGTRVRKNHTSRRDAFKTVGATPIGKIEYDTETVSFHRDHAARESTELNLTSELNEDVMLLTFTPGMNIDRQTAFLTDSTPDGLIIAGTGLGHVHTEFIPTVAELVADGVVVAMTSQCIEGRVCDRVYDTGRDLLEAGVVEAGDTLPGTAKVKLMWALANHPDPTNAMRKSLAGELQHRSVPWE</sequence>
<organism>
    <name type="scientific">Haloquadratum walsbyi (strain DSM 16790 / HBSQ001)</name>
    <dbReference type="NCBI Taxonomy" id="362976"/>
    <lineage>
        <taxon>Archaea</taxon>
        <taxon>Methanobacteriati</taxon>
        <taxon>Methanobacteriota</taxon>
        <taxon>Stenosarchaea group</taxon>
        <taxon>Halobacteria</taxon>
        <taxon>Halobacteriales</taxon>
        <taxon>Haloferacaceae</taxon>
        <taxon>Haloquadratum</taxon>
    </lineage>
</organism>
<keyword id="KW-0067">ATP-binding</keyword>
<keyword id="KW-0436">Ligase</keyword>
<keyword id="KW-0547">Nucleotide-binding</keyword>
<keyword id="KW-0648">Protein biosynthesis</keyword>
<keyword id="KW-1185">Reference proteome</keyword>
<proteinExistence type="inferred from homology"/>
<comment type="function">
    <text evidence="1">Allows the formation of correctly charged Gln-tRNA(Gln) through the transamidation of misacylated Glu-tRNA(Gln) in organisms which lack glutaminyl-tRNA synthetase. The reaction takes place in the presence of glutamine and ATP through an activated gamma-phospho-Glu-tRNA(Gln). The GatDE system is specific for glutamate and does not act on aspartate.</text>
</comment>
<comment type="catalytic activity">
    <reaction evidence="1">
        <text>L-glutamyl-tRNA(Gln) + L-glutamine + ATP + H2O = L-glutaminyl-tRNA(Gln) + L-glutamate + ADP + phosphate + H(+)</text>
        <dbReference type="Rhea" id="RHEA:17521"/>
        <dbReference type="Rhea" id="RHEA-COMP:9681"/>
        <dbReference type="Rhea" id="RHEA-COMP:9684"/>
        <dbReference type="ChEBI" id="CHEBI:15377"/>
        <dbReference type="ChEBI" id="CHEBI:15378"/>
        <dbReference type="ChEBI" id="CHEBI:29985"/>
        <dbReference type="ChEBI" id="CHEBI:30616"/>
        <dbReference type="ChEBI" id="CHEBI:43474"/>
        <dbReference type="ChEBI" id="CHEBI:58359"/>
        <dbReference type="ChEBI" id="CHEBI:78520"/>
        <dbReference type="ChEBI" id="CHEBI:78521"/>
        <dbReference type="ChEBI" id="CHEBI:456216"/>
    </reaction>
</comment>
<comment type="subunit">
    <text evidence="1">Heterodimer of GatD and GatE.</text>
</comment>
<comment type="similarity">
    <text evidence="1">Belongs to the asparaginase 1 family. GatD subfamily.</text>
</comment>
<dbReference type="EC" id="6.3.5.-" evidence="1"/>
<dbReference type="EMBL" id="AM180088">
    <property type="protein sequence ID" value="CAJ52884.1"/>
    <property type="molecule type" value="Genomic_DNA"/>
</dbReference>
<dbReference type="RefSeq" id="WP_011571998.1">
    <property type="nucleotide sequence ID" value="NC_008212.1"/>
</dbReference>
<dbReference type="SMR" id="Q18GL3"/>
<dbReference type="STRING" id="362976.HQ_2776A"/>
<dbReference type="GeneID" id="4194013"/>
<dbReference type="KEGG" id="hwa:HQ_2776A"/>
<dbReference type="eggNOG" id="arCOG01924">
    <property type="taxonomic scope" value="Archaea"/>
</dbReference>
<dbReference type="HOGENOM" id="CLU_019134_2_1_2"/>
<dbReference type="Proteomes" id="UP000001975">
    <property type="component" value="Chromosome"/>
</dbReference>
<dbReference type="GO" id="GO:0004067">
    <property type="term" value="F:asparaginase activity"/>
    <property type="evidence" value="ECO:0007669"/>
    <property type="project" value="InterPro"/>
</dbReference>
<dbReference type="GO" id="GO:0005524">
    <property type="term" value="F:ATP binding"/>
    <property type="evidence" value="ECO:0007669"/>
    <property type="project" value="UniProtKB-KW"/>
</dbReference>
<dbReference type="GO" id="GO:0050567">
    <property type="term" value="F:glutaminyl-tRNA synthase (glutamine-hydrolyzing) activity"/>
    <property type="evidence" value="ECO:0007669"/>
    <property type="project" value="UniProtKB-UniRule"/>
</dbReference>
<dbReference type="GO" id="GO:0006520">
    <property type="term" value="P:amino acid metabolic process"/>
    <property type="evidence" value="ECO:0007669"/>
    <property type="project" value="InterPro"/>
</dbReference>
<dbReference type="GO" id="GO:0006450">
    <property type="term" value="P:regulation of translational fidelity"/>
    <property type="evidence" value="ECO:0007669"/>
    <property type="project" value="InterPro"/>
</dbReference>
<dbReference type="GO" id="GO:0006412">
    <property type="term" value="P:translation"/>
    <property type="evidence" value="ECO:0007669"/>
    <property type="project" value="UniProtKB-UniRule"/>
</dbReference>
<dbReference type="CDD" id="cd08962">
    <property type="entry name" value="GatD"/>
    <property type="match status" value="1"/>
</dbReference>
<dbReference type="Gene3D" id="2.30.30.520">
    <property type="match status" value="1"/>
</dbReference>
<dbReference type="Gene3D" id="3.40.50.40">
    <property type="match status" value="1"/>
</dbReference>
<dbReference type="Gene3D" id="3.40.50.1170">
    <property type="entry name" value="L-asparaginase, N-terminal domain"/>
    <property type="match status" value="1"/>
</dbReference>
<dbReference type="HAMAP" id="MF_00586">
    <property type="entry name" value="GatD"/>
    <property type="match status" value="1"/>
</dbReference>
<dbReference type="InterPro" id="IPR006033">
    <property type="entry name" value="AsnA_fam"/>
</dbReference>
<dbReference type="InterPro" id="IPR036152">
    <property type="entry name" value="Asp/glu_Ase-like_sf"/>
</dbReference>
<dbReference type="InterPro" id="IPR006034">
    <property type="entry name" value="Asparaginase/glutaminase-like"/>
</dbReference>
<dbReference type="InterPro" id="IPR020827">
    <property type="entry name" value="Asparaginase/glutaminase_AS1"/>
</dbReference>
<dbReference type="InterPro" id="IPR027475">
    <property type="entry name" value="Asparaginase/glutaminase_AS2"/>
</dbReference>
<dbReference type="InterPro" id="IPR040919">
    <property type="entry name" value="Asparaginase_C"/>
</dbReference>
<dbReference type="InterPro" id="IPR011878">
    <property type="entry name" value="GatD"/>
</dbReference>
<dbReference type="InterPro" id="IPR040918">
    <property type="entry name" value="GatD_N"/>
</dbReference>
<dbReference type="InterPro" id="IPR037222">
    <property type="entry name" value="GatD_N_sf"/>
</dbReference>
<dbReference type="InterPro" id="IPR027473">
    <property type="entry name" value="L-asparaginase_C"/>
</dbReference>
<dbReference type="InterPro" id="IPR027474">
    <property type="entry name" value="L-asparaginase_N"/>
</dbReference>
<dbReference type="InterPro" id="IPR037152">
    <property type="entry name" value="L-asparaginase_N_sf"/>
</dbReference>
<dbReference type="NCBIfam" id="TIGR00519">
    <property type="entry name" value="asnASE_I"/>
    <property type="match status" value="1"/>
</dbReference>
<dbReference type="NCBIfam" id="TIGR02153">
    <property type="entry name" value="gatD_arch"/>
    <property type="match status" value="1"/>
</dbReference>
<dbReference type="NCBIfam" id="NF003217">
    <property type="entry name" value="PRK04183.1"/>
    <property type="match status" value="1"/>
</dbReference>
<dbReference type="PANTHER" id="PTHR11707:SF28">
    <property type="entry name" value="60 KDA LYSOPHOSPHOLIPASE"/>
    <property type="match status" value="1"/>
</dbReference>
<dbReference type="PANTHER" id="PTHR11707">
    <property type="entry name" value="L-ASPARAGINASE"/>
    <property type="match status" value="1"/>
</dbReference>
<dbReference type="Pfam" id="PF00710">
    <property type="entry name" value="Asparaginase"/>
    <property type="match status" value="1"/>
</dbReference>
<dbReference type="Pfam" id="PF17763">
    <property type="entry name" value="Asparaginase_C"/>
    <property type="match status" value="1"/>
</dbReference>
<dbReference type="Pfam" id="PF18195">
    <property type="entry name" value="GatD_N"/>
    <property type="match status" value="1"/>
</dbReference>
<dbReference type="PIRSF" id="PIRSF500175">
    <property type="entry name" value="Glu_ADT_D"/>
    <property type="match status" value="1"/>
</dbReference>
<dbReference type="PIRSF" id="PIRSF001220">
    <property type="entry name" value="L-ASNase_gatD"/>
    <property type="match status" value="1"/>
</dbReference>
<dbReference type="PRINTS" id="PR00139">
    <property type="entry name" value="ASNGLNASE"/>
</dbReference>
<dbReference type="SFLD" id="SFLDS00057">
    <property type="entry name" value="Glutaminase/Asparaginase"/>
    <property type="match status" value="1"/>
</dbReference>
<dbReference type="SMART" id="SM00870">
    <property type="entry name" value="Asparaginase"/>
    <property type="match status" value="1"/>
</dbReference>
<dbReference type="SUPFAM" id="SSF141300">
    <property type="entry name" value="GatD N-terminal domain-like"/>
    <property type="match status" value="1"/>
</dbReference>
<dbReference type="SUPFAM" id="SSF53774">
    <property type="entry name" value="Glutaminase/Asparaginase"/>
    <property type="match status" value="1"/>
</dbReference>
<dbReference type="PROSITE" id="PS00144">
    <property type="entry name" value="ASN_GLN_ASE_1"/>
    <property type="match status" value="1"/>
</dbReference>
<dbReference type="PROSITE" id="PS00917">
    <property type="entry name" value="ASN_GLN_ASE_2"/>
    <property type="match status" value="1"/>
</dbReference>
<dbReference type="PROSITE" id="PS51732">
    <property type="entry name" value="ASN_GLN_ASE_3"/>
    <property type="match status" value="1"/>
</dbReference>
<name>GATD_HALWD</name>
<accession>Q18GL3</accession>